<name>RNPH_GEODF</name>
<organism>
    <name type="scientific">Geotalea daltonii (strain DSM 22248 / JCM 15807 / FRC-32)</name>
    <name type="common">Geobacter daltonii</name>
    <dbReference type="NCBI Taxonomy" id="316067"/>
    <lineage>
        <taxon>Bacteria</taxon>
        <taxon>Pseudomonadati</taxon>
        <taxon>Thermodesulfobacteriota</taxon>
        <taxon>Desulfuromonadia</taxon>
        <taxon>Geobacterales</taxon>
        <taxon>Geobacteraceae</taxon>
        <taxon>Geotalea</taxon>
    </lineage>
</organism>
<comment type="function">
    <text evidence="1">Phosphorolytic 3'-5' exoribonuclease that plays an important role in tRNA 3'-end maturation. Removes nucleotide residues following the 3'-CCA terminus of tRNAs; can also add nucleotides to the ends of RNA molecules by using nucleoside diphosphates as substrates, but this may not be physiologically important. Probably plays a role in initiation of 16S rRNA degradation (leading to ribosome degradation) during starvation.</text>
</comment>
<comment type="catalytic activity">
    <reaction evidence="1">
        <text>tRNA(n+1) + phosphate = tRNA(n) + a ribonucleoside 5'-diphosphate</text>
        <dbReference type="Rhea" id="RHEA:10628"/>
        <dbReference type="Rhea" id="RHEA-COMP:17343"/>
        <dbReference type="Rhea" id="RHEA-COMP:17344"/>
        <dbReference type="ChEBI" id="CHEBI:43474"/>
        <dbReference type="ChEBI" id="CHEBI:57930"/>
        <dbReference type="ChEBI" id="CHEBI:173114"/>
        <dbReference type="EC" id="2.7.7.56"/>
    </reaction>
</comment>
<comment type="subunit">
    <text evidence="1">Homohexameric ring arranged as a trimer of dimers.</text>
</comment>
<comment type="similarity">
    <text evidence="1">Belongs to the RNase PH family.</text>
</comment>
<keyword id="KW-0548">Nucleotidyltransferase</keyword>
<keyword id="KW-1185">Reference proteome</keyword>
<keyword id="KW-0694">RNA-binding</keyword>
<keyword id="KW-0698">rRNA processing</keyword>
<keyword id="KW-0808">Transferase</keyword>
<keyword id="KW-0819">tRNA processing</keyword>
<keyword id="KW-0820">tRNA-binding</keyword>
<sequence>MRFDGRGEGSLREVRITRNYIKHAEGSVLVEFGDTKVICTASVESSVPPFLRGKGTGWVTAEYSMLPRATHSRSPREAAKGKVGGRTHEIQRLIGRSLRAVVDMSLLGERSIIIDCDVIQADGGTRTASITGAYVALCDALQGLVAKGELSSLPIREAVAAVSVGIVGGVAVLDLNYVEDSAAEVDMNFVMTSSNRFVEVQGTAEAEPFTIEQMDAMRTLAVDGIKQLFQIQQAVLAR</sequence>
<protein>
    <recommendedName>
        <fullName evidence="1">Ribonuclease PH</fullName>
        <shortName evidence="1">RNase PH</shortName>
        <ecNumber evidence="1">2.7.7.56</ecNumber>
    </recommendedName>
    <alternativeName>
        <fullName evidence="1">tRNA nucleotidyltransferase</fullName>
    </alternativeName>
</protein>
<feature type="chain" id="PRO_1000146775" description="Ribonuclease PH">
    <location>
        <begin position="1"/>
        <end position="238"/>
    </location>
</feature>
<feature type="binding site" evidence="1">
    <location>
        <position position="86"/>
    </location>
    <ligand>
        <name>phosphate</name>
        <dbReference type="ChEBI" id="CHEBI:43474"/>
        <note>substrate</note>
    </ligand>
</feature>
<feature type="binding site" evidence="1">
    <location>
        <begin position="124"/>
        <end position="126"/>
    </location>
    <ligand>
        <name>phosphate</name>
        <dbReference type="ChEBI" id="CHEBI:43474"/>
        <note>substrate</note>
    </ligand>
</feature>
<accession>B9M3E3</accession>
<reference key="1">
    <citation type="submission" date="2009-01" db="EMBL/GenBank/DDBJ databases">
        <title>Complete sequence of Geobacter sp. FRC-32.</title>
        <authorList>
            <consortium name="US DOE Joint Genome Institute"/>
            <person name="Lucas S."/>
            <person name="Copeland A."/>
            <person name="Lapidus A."/>
            <person name="Glavina del Rio T."/>
            <person name="Dalin E."/>
            <person name="Tice H."/>
            <person name="Bruce D."/>
            <person name="Goodwin L."/>
            <person name="Pitluck S."/>
            <person name="Saunders E."/>
            <person name="Brettin T."/>
            <person name="Detter J.C."/>
            <person name="Han C."/>
            <person name="Larimer F."/>
            <person name="Land M."/>
            <person name="Hauser L."/>
            <person name="Kyrpides N."/>
            <person name="Ovchinnikova G."/>
            <person name="Kostka J."/>
            <person name="Richardson P."/>
        </authorList>
    </citation>
    <scope>NUCLEOTIDE SEQUENCE [LARGE SCALE GENOMIC DNA]</scope>
    <source>
        <strain>DSM 22248 / JCM 15807 / FRC-32</strain>
    </source>
</reference>
<gene>
    <name evidence="1" type="primary">rph</name>
    <name type="ordered locus">Geob_3021</name>
</gene>
<proteinExistence type="inferred from homology"/>
<dbReference type="EC" id="2.7.7.56" evidence="1"/>
<dbReference type="EMBL" id="CP001390">
    <property type="protein sequence ID" value="ACM21364.1"/>
    <property type="molecule type" value="Genomic_DNA"/>
</dbReference>
<dbReference type="RefSeq" id="WP_012648092.1">
    <property type="nucleotide sequence ID" value="NC_011979.1"/>
</dbReference>
<dbReference type="SMR" id="B9M3E3"/>
<dbReference type="STRING" id="316067.Geob_3021"/>
<dbReference type="KEGG" id="geo:Geob_3021"/>
<dbReference type="eggNOG" id="COG0689">
    <property type="taxonomic scope" value="Bacteria"/>
</dbReference>
<dbReference type="HOGENOM" id="CLU_050858_0_0_7"/>
<dbReference type="OrthoDB" id="9802265at2"/>
<dbReference type="Proteomes" id="UP000007721">
    <property type="component" value="Chromosome"/>
</dbReference>
<dbReference type="GO" id="GO:0000175">
    <property type="term" value="F:3'-5'-RNA exonuclease activity"/>
    <property type="evidence" value="ECO:0007669"/>
    <property type="project" value="UniProtKB-UniRule"/>
</dbReference>
<dbReference type="GO" id="GO:0000049">
    <property type="term" value="F:tRNA binding"/>
    <property type="evidence" value="ECO:0007669"/>
    <property type="project" value="UniProtKB-UniRule"/>
</dbReference>
<dbReference type="GO" id="GO:0009022">
    <property type="term" value="F:tRNA nucleotidyltransferase activity"/>
    <property type="evidence" value="ECO:0007669"/>
    <property type="project" value="UniProtKB-UniRule"/>
</dbReference>
<dbReference type="GO" id="GO:0016075">
    <property type="term" value="P:rRNA catabolic process"/>
    <property type="evidence" value="ECO:0007669"/>
    <property type="project" value="UniProtKB-UniRule"/>
</dbReference>
<dbReference type="GO" id="GO:0006364">
    <property type="term" value="P:rRNA processing"/>
    <property type="evidence" value="ECO:0007669"/>
    <property type="project" value="UniProtKB-KW"/>
</dbReference>
<dbReference type="GO" id="GO:0008033">
    <property type="term" value="P:tRNA processing"/>
    <property type="evidence" value="ECO:0007669"/>
    <property type="project" value="UniProtKB-UniRule"/>
</dbReference>
<dbReference type="CDD" id="cd11362">
    <property type="entry name" value="RNase_PH_bact"/>
    <property type="match status" value="1"/>
</dbReference>
<dbReference type="FunFam" id="3.30.230.70:FF:000003">
    <property type="entry name" value="Ribonuclease PH"/>
    <property type="match status" value="1"/>
</dbReference>
<dbReference type="Gene3D" id="3.30.230.70">
    <property type="entry name" value="GHMP Kinase, N-terminal domain"/>
    <property type="match status" value="1"/>
</dbReference>
<dbReference type="HAMAP" id="MF_00564">
    <property type="entry name" value="RNase_PH"/>
    <property type="match status" value="1"/>
</dbReference>
<dbReference type="InterPro" id="IPR001247">
    <property type="entry name" value="ExoRNase_PH_dom1"/>
</dbReference>
<dbReference type="InterPro" id="IPR015847">
    <property type="entry name" value="ExoRNase_PH_dom2"/>
</dbReference>
<dbReference type="InterPro" id="IPR036345">
    <property type="entry name" value="ExoRNase_PH_dom2_sf"/>
</dbReference>
<dbReference type="InterPro" id="IPR027408">
    <property type="entry name" value="PNPase/RNase_PH_dom_sf"/>
</dbReference>
<dbReference type="InterPro" id="IPR020568">
    <property type="entry name" value="Ribosomal_Su5_D2-typ_SF"/>
</dbReference>
<dbReference type="InterPro" id="IPR050080">
    <property type="entry name" value="RNase_PH"/>
</dbReference>
<dbReference type="InterPro" id="IPR002381">
    <property type="entry name" value="RNase_PH_bac-type"/>
</dbReference>
<dbReference type="InterPro" id="IPR018336">
    <property type="entry name" value="RNase_PH_CS"/>
</dbReference>
<dbReference type="NCBIfam" id="TIGR01966">
    <property type="entry name" value="RNasePH"/>
    <property type="match status" value="1"/>
</dbReference>
<dbReference type="PANTHER" id="PTHR11953">
    <property type="entry name" value="EXOSOME COMPLEX COMPONENT"/>
    <property type="match status" value="1"/>
</dbReference>
<dbReference type="PANTHER" id="PTHR11953:SF0">
    <property type="entry name" value="EXOSOME COMPLEX COMPONENT RRP41"/>
    <property type="match status" value="1"/>
</dbReference>
<dbReference type="Pfam" id="PF01138">
    <property type="entry name" value="RNase_PH"/>
    <property type="match status" value="1"/>
</dbReference>
<dbReference type="Pfam" id="PF03725">
    <property type="entry name" value="RNase_PH_C"/>
    <property type="match status" value="1"/>
</dbReference>
<dbReference type="SUPFAM" id="SSF55666">
    <property type="entry name" value="Ribonuclease PH domain 2-like"/>
    <property type="match status" value="1"/>
</dbReference>
<dbReference type="SUPFAM" id="SSF54211">
    <property type="entry name" value="Ribosomal protein S5 domain 2-like"/>
    <property type="match status" value="1"/>
</dbReference>
<dbReference type="PROSITE" id="PS01277">
    <property type="entry name" value="RIBONUCLEASE_PH"/>
    <property type="match status" value="1"/>
</dbReference>
<evidence type="ECO:0000255" key="1">
    <source>
        <dbReference type="HAMAP-Rule" id="MF_00564"/>
    </source>
</evidence>